<name>TRMB_CYTH3</name>
<proteinExistence type="inferred from homology"/>
<sequence length="221" mass="25884">MARKKLMRFKWNEEVHNLFQPEKENYKAYKGKWHEYFKNDNPVILEVGCGRAEYTTGLAALFPENNYIGLDIKGARLWKGSSLSIETGLTNTAFIRTKLQNLEEFFEPGEVKGIWITFPDPKPRESEAKLRLSGLRFMNIYRRLMPAGGKVFFKTDNRVLFDHTLEVLTDQTLKIKDLVFTHDLYQSPLLAEHYGIQTTYEKTYLNQGVQINYLKFEFLPL</sequence>
<gene>
    <name evidence="2" type="primary">trmB</name>
    <name type="ordered locus">CHU_1543</name>
</gene>
<accession>Q11UV2</accession>
<dbReference type="EC" id="2.1.1.33" evidence="2"/>
<dbReference type="EMBL" id="CP000383">
    <property type="protein sequence ID" value="ABG58814.1"/>
    <property type="molecule type" value="Genomic_DNA"/>
</dbReference>
<dbReference type="RefSeq" id="WP_011584929.1">
    <property type="nucleotide sequence ID" value="NC_008255.1"/>
</dbReference>
<dbReference type="SMR" id="Q11UV2"/>
<dbReference type="STRING" id="269798.CHU_1543"/>
<dbReference type="KEGG" id="chu:CHU_1543"/>
<dbReference type="eggNOG" id="COG0220">
    <property type="taxonomic scope" value="Bacteria"/>
</dbReference>
<dbReference type="HOGENOM" id="CLU_050910_2_1_10"/>
<dbReference type="OrthoDB" id="9802090at2"/>
<dbReference type="UniPathway" id="UPA00989"/>
<dbReference type="Proteomes" id="UP000001822">
    <property type="component" value="Chromosome"/>
</dbReference>
<dbReference type="GO" id="GO:0043527">
    <property type="term" value="C:tRNA methyltransferase complex"/>
    <property type="evidence" value="ECO:0007669"/>
    <property type="project" value="TreeGrafter"/>
</dbReference>
<dbReference type="GO" id="GO:0008176">
    <property type="term" value="F:tRNA (guanine(46)-N7)-methyltransferase activity"/>
    <property type="evidence" value="ECO:0007669"/>
    <property type="project" value="UniProtKB-UniRule"/>
</dbReference>
<dbReference type="Gene3D" id="3.40.50.150">
    <property type="entry name" value="Vaccinia Virus protein VP39"/>
    <property type="match status" value="1"/>
</dbReference>
<dbReference type="HAMAP" id="MF_01057">
    <property type="entry name" value="tRNA_methyltr_TrmB"/>
    <property type="match status" value="1"/>
</dbReference>
<dbReference type="InterPro" id="IPR029063">
    <property type="entry name" value="SAM-dependent_MTases_sf"/>
</dbReference>
<dbReference type="InterPro" id="IPR003358">
    <property type="entry name" value="tRNA_(Gua-N-7)_MeTrfase_Trmb"/>
</dbReference>
<dbReference type="InterPro" id="IPR055361">
    <property type="entry name" value="tRNA_methyltr_TrmB_bact"/>
</dbReference>
<dbReference type="NCBIfam" id="NF001080">
    <property type="entry name" value="PRK00121.2-2"/>
    <property type="match status" value="1"/>
</dbReference>
<dbReference type="PANTHER" id="PTHR23417">
    <property type="entry name" value="3-DEOXY-D-MANNO-OCTULOSONIC-ACID TRANSFERASE/TRNA GUANINE-N 7 - -METHYLTRANSFERASE"/>
    <property type="match status" value="1"/>
</dbReference>
<dbReference type="PANTHER" id="PTHR23417:SF14">
    <property type="entry name" value="PENTACOTRIPEPTIDE-REPEAT REGION OF PRORP DOMAIN-CONTAINING PROTEIN"/>
    <property type="match status" value="1"/>
</dbReference>
<dbReference type="Pfam" id="PF02390">
    <property type="entry name" value="Methyltransf_4"/>
    <property type="match status" value="1"/>
</dbReference>
<dbReference type="SUPFAM" id="SSF53335">
    <property type="entry name" value="S-adenosyl-L-methionine-dependent methyltransferases"/>
    <property type="match status" value="1"/>
</dbReference>
<dbReference type="PROSITE" id="PS51625">
    <property type="entry name" value="SAM_MT_TRMB"/>
    <property type="match status" value="1"/>
</dbReference>
<comment type="function">
    <text evidence="2">Catalyzes the formation of N(7)-methylguanine at position 46 (m7G46) in tRNA.</text>
</comment>
<comment type="catalytic activity">
    <reaction evidence="2">
        <text>guanosine(46) in tRNA + S-adenosyl-L-methionine = N(7)-methylguanosine(46) in tRNA + S-adenosyl-L-homocysteine</text>
        <dbReference type="Rhea" id="RHEA:42708"/>
        <dbReference type="Rhea" id="RHEA-COMP:10188"/>
        <dbReference type="Rhea" id="RHEA-COMP:10189"/>
        <dbReference type="ChEBI" id="CHEBI:57856"/>
        <dbReference type="ChEBI" id="CHEBI:59789"/>
        <dbReference type="ChEBI" id="CHEBI:74269"/>
        <dbReference type="ChEBI" id="CHEBI:74480"/>
        <dbReference type="EC" id="2.1.1.33"/>
    </reaction>
</comment>
<comment type="pathway">
    <text evidence="2">tRNA modification; N(7)-methylguanine-tRNA biosynthesis.</text>
</comment>
<comment type="similarity">
    <text evidence="2">Belongs to the class I-like SAM-binding methyltransferase superfamily. TrmB family.</text>
</comment>
<organism>
    <name type="scientific">Cytophaga hutchinsonii (strain ATCC 33406 / DSM 1761 / CIP 103989 / NBRC 15051 / NCIMB 9469 / D465)</name>
    <dbReference type="NCBI Taxonomy" id="269798"/>
    <lineage>
        <taxon>Bacteria</taxon>
        <taxon>Pseudomonadati</taxon>
        <taxon>Bacteroidota</taxon>
        <taxon>Cytophagia</taxon>
        <taxon>Cytophagales</taxon>
        <taxon>Cytophagaceae</taxon>
        <taxon>Cytophaga</taxon>
    </lineage>
</organism>
<reference key="1">
    <citation type="journal article" date="2007" name="Appl. Environ. Microbiol.">
        <title>Genome sequence of the cellulolytic gliding bacterium Cytophaga hutchinsonii.</title>
        <authorList>
            <person name="Xie G."/>
            <person name="Bruce D.C."/>
            <person name="Challacombe J.F."/>
            <person name="Chertkov O."/>
            <person name="Detter J.C."/>
            <person name="Gilna P."/>
            <person name="Han C.S."/>
            <person name="Lucas S."/>
            <person name="Misra M."/>
            <person name="Myers G.L."/>
            <person name="Richardson P."/>
            <person name="Tapia R."/>
            <person name="Thayer N."/>
            <person name="Thompson L.S."/>
            <person name="Brettin T.S."/>
            <person name="Henrissat B."/>
            <person name="Wilson D.B."/>
            <person name="McBride M.J."/>
        </authorList>
    </citation>
    <scope>NUCLEOTIDE SEQUENCE [LARGE SCALE GENOMIC DNA]</scope>
    <source>
        <strain>ATCC 33406 / DSM 1761 / JCM 20678 / CIP 103989 / IAM 12607 / NBRC 15051 / NCIMB 9469 / D465</strain>
    </source>
</reference>
<protein>
    <recommendedName>
        <fullName evidence="2">tRNA (guanine-N(7)-)-methyltransferase</fullName>
        <ecNumber evidence="2">2.1.1.33</ecNumber>
    </recommendedName>
    <alternativeName>
        <fullName evidence="2">tRNA (guanine(46)-N(7))-methyltransferase</fullName>
    </alternativeName>
    <alternativeName>
        <fullName evidence="2">tRNA(m7G46)-methyltransferase</fullName>
    </alternativeName>
</protein>
<feature type="chain" id="PRO_0000288143" description="tRNA (guanine-N(7)-)-methyltransferase">
    <location>
        <begin position="1"/>
        <end position="221"/>
    </location>
</feature>
<feature type="active site" evidence="1">
    <location>
        <position position="120"/>
    </location>
</feature>
<feature type="binding site" evidence="2">
    <location>
        <position position="46"/>
    </location>
    <ligand>
        <name>S-adenosyl-L-methionine</name>
        <dbReference type="ChEBI" id="CHEBI:59789"/>
    </ligand>
</feature>
<feature type="binding site" evidence="2">
    <location>
        <position position="71"/>
    </location>
    <ligand>
        <name>S-adenosyl-L-methionine</name>
        <dbReference type="ChEBI" id="CHEBI:59789"/>
    </ligand>
</feature>
<feature type="binding site" evidence="2">
    <location>
        <position position="120"/>
    </location>
    <ligand>
        <name>S-adenosyl-L-methionine</name>
        <dbReference type="ChEBI" id="CHEBI:59789"/>
    </ligand>
</feature>
<feature type="binding site" evidence="2">
    <location>
        <position position="156"/>
    </location>
    <ligand>
        <name>substrate</name>
    </ligand>
</feature>
<evidence type="ECO:0000250" key="1"/>
<evidence type="ECO:0000255" key="2">
    <source>
        <dbReference type="HAMAP-Rule" id="MF_01057"/>
    </source>
</evidence>
<keyword id="KW-0489">Methyltransferase</keyword>
<keyword id="KW-1185">Reference proteome</keyword>
<keyword id="KW-0949">S-adenosyl-L-methionine</keyword>
<keyword id="KW-0808">Transferase</keyword>
<keyword id="KW-0819">tRNA processing</keyword>